<proteinExistence type="evidence at transcript level"/>
<sequence>MAALGGLTHSRTLFVDDDGTPMSFYVPPGPLKRQLYPLITHGGGEMCRMQQPGALLLSAPGSAQGAQYVSTAYIMDCVRIDKLLDVDDYRLDGSHGRPRKSQGSKKEERAPQQKVGESSQESDQKQQAKVGGDLEEGDKLSDPGEPVNEESLGSVSSTRKKENKMDCSEAQKIGSLKSARIHQTRRNVFTEKEDVAIMLYVRENAPHRGTGVSLWKEMEQKQVVKRTWQAIKNRYFRYLKGKRNYVLPLTDDSSSQEPSDDEEECPQPITKKSRISDSTPCTEKPGVAEKTGEKLSTDTSVEGPSTEKSDAAKTSNVNLPVEERGQEVTEGAIKRSEGNKKSTEMNEEAVSASSKENQDDGADLHIFEIANLEFEVEDTPELEVPKRSFGLKEFVMGEDLPSSQSQTQVDEVSSSPDASESEGLQEALLSMMSEFKLSLCDVTQALLKNNGELAATRHFLQTGSRPDGYPIWVRKDDLDLQKDDAETLKRLIQKYGADNVAKRVAFLAS</sequence>
<organism>
    <name type="scientific">Xenopus tropicalis</name>
    <name type="common">Western clawed frog</name>
    <name type="synonym">Silurana tropicalis</name>
    <dbReference type="NCBI Taxonomy" id="8364"/>
    <lineage>
        <taxon>Eukaryota</taxon>
        <taxon>Metazoa</taxon>
        <taxon>Chordata</taxon>
        <taxon>Craniata</taxon>
        <taxon>Vertebrata</taxon>
        <taxon>Euteleostomi</taxon>
        <taxon>Amphibia</taxon>
        <taxon>Batrachia</taxon>
        <taxon>Anura</taxon>
        <taxon>Pipoidea</taxon>
        <taxon>Pipidae</taxon>
        <taxon>Xenopodinae</taxon>
        <taxon>Xenopus</taxon>
        <taxon>Silurana</taxon>
    </lineage>
</organism>
<reference key="1">
    <citation type="journal article" date="2009" name="FASEB J.">
        <title>Developmental studies of Xenopus shelterin complexes: the message to reset telomere length is already present in the egg.</title>
        <authorList>
            <person name="Vizlin-Hodzic D."/>
            <person name="Ryme J."/>
            <person name="Simonsson S."/>
            <person name="Simonsson T."/>
        </authorList>
    </citation>
    <scope>NUCLEOTIDE SEQUENCE [MRNA]</scope>
</reference>
<reference key="2">
    <citation type="submission" date="2006-08" db="EMBL/GenBank/DDBJ databases">
        <authorList>
            <consortium name="NIH - Xenopus Gene Collection (XGC) project"/>
        </authorList>
    </citation>
    <scope>NUCLEOTIDE SEQUENCE [LARGE SCALE MRNA]</scope>
    <source>
        <strain>N6</strain>
        <tissue>Heart</tissue>
    </source>
</reference>
<name>TE2IP_XENTR</name>
<protein>
    <recommendedName>
        <fullName>Telomeric repeat-binding factor 2-interacting protein 1</fullName>
        <shortName>TERF2-interacting telomeric protein 1</shortName>
        <shortName>TRF2-interacting telomeric protein 1</shortName>
    </recommendedName>
    <alternativeName>
        <fullName>Repressor/activator protein 1 homolog</fullName>
        <shortName>RAP1 homolog</shortName>
        <shortName>XtRAP1</shortName>
    </alternativeName>
</protein>
<gene>
    <name type="primary">terf2ip</name>
    <name type="synonym">rap1</name>
</gene>
<feature type="chain" id="PRO_0000398645" description="Telomeric repeat-binding factor 2-interacting protein 1">
    <location>
        <begin position="1"/>
        <end position="509"/>
    </location>
</feature>
<feature type="domain" description="BRCT">
    <location>
        <begin position="1"/>
        <end position="91"/>
    </location>
</feature>
<feature type="domain" description="Myb-like">
    <location>
        <begin position="185"/>
        <end position="239"/>
    </location>
</feature>
<feature type="region of interest" description="Disordered" evidence="4">
    <location>
        <begin position="93"/>
        <end position="168"/>
    </location>
</feature>
<feature type="region of interest" description="Disordered" evidence="4">
    <location>
        <begin position="249"/>
        <end position="359"/>
    </location>
</feature>
<feature type="region of interest" description="Disordered" evidence="4">
    <location>
        <begin position="399"/>
        <end position="423"/>
    </location>
</feature>
<feature type="short sequence motif" description="Nuclear localization signal" evidence="3">
    <location>
        <begin position="493"/>
        <end position="509"/>
    </location>
</feature>
<feature type="compositionally biased region" description="Polar residues" evidence="4">
    <location>
        <begin position="115"/>
        <end position="127"/>
    </location>
</feature>
<feature type="compositionally biased region" description="Basic and acidic residues" evidence="4">
    <location>
        <begin position="159"/>
        <end position="168"/>
    </location>
</feature>
<feature type="compositionally biased region" description="Basic and acidic residues" evidence="4">
    <location>
        <begin position="286"/>
        <end position="296"/>
    </location>
</feature>
<feature type="compositionally biased region" description="Basic and acidic residues" evidence="4">
    <location>
        <begin position="321"/>
        <end position="344"/>
    </location>
</feature>
<feature type="compositionally biased region" description="Polar residues" evidence="4">
    <location>
        <begin position="401"/>
        <end position="418"/>
    </location>
</feature>
<feature type="sequence conflict" description="In Ref. 1; ACC76749." evidence="5" ref="1">
    <original>G</original>
    <variation>W</variation>
    <location>
        <position position="325"/>
    </location>
</feature>
<feature type="sequence conflict" description="In Ref. 1; ACC76749." evidence="5" ref="1">
    <original>N</original>
    <variation>E</variation>
    <location>
        <position position="339"/>
    </location>
</feature>
<feature type="sequence conflict" description="In Ref. 1; ACC76749." evidence="5" ref="1">
    <original>TE</original>
    <variation>SD</variation>
    <location>
        <begin position="343"/>
        <end position="344"/>
    </location>
</feature>
<evidence type="ECO:0000250" key="1"/>
<evidence type="ECO:0000250" key="2">
    <source>
        <dbReference type="UniProtKB" id="Q91VL8"/>
    </source>
</evidence>
<evidence type="ECO:0000255" key="3"/>
<evidence type="ECO:0000256" key="4">
    <source>
        <dbReference type="SAM" id="MobiDB-lite"/>
    </source>
</evidence>
<evidence type="ECO:0000305" key="5"/>
<comment type="function">
    <text evidence="1">Acts both as a regulator of telomere function and as a transcription regulator. Involved in the regulation of telomere length and protection as a component of the shelterin complex (telosome). Does not bind DNA directly: recruited to telomeric double-stranded 5'-TTAGGG-3' repeats via its interaction with terf2. Independently of its function in telomeres, also acts as a transcription regulator: recruited to extratelomeric 5'-TTAGGG-3' sites via its association with terf2 or other factors, and regulates gene expression (By similarity).</text>
</comment>
<comment type="subunit">
    <text evidence="1">Homodimer. Component of the shelterin complex (telosome). Interacts with terf2; the interaction is direct (By similarity).</text>
</comment>
<comment type="subcellular location">
    <subcellularLocation>
        <location evidence="2">Nucleus</location>
    </subcellularLocation>
    <subcellularLocation>
        <location evidence="2">Chromosome</location>
        <location evidence="2">Telomere</location>
    </subcellularLocation>
</comment>
<comment type="similarity">
    <text evidence="5">Belongs to the RAP1 family.</text>
</comment>
<keyword id="KW-0010">Activator</keyword>
<keyword id="KW-0158">Chromosome</keyword>
<keyword id="KW-0539">Nucleus</keyword>
<keyword id="KW-1185">Reference proteome</keyword>
<keyword id="KW-0779">Telomere</keyword>
<keyword id="KW-0804">Transcription</keyword>
<keyword id="KW-0805">Transcription regulation</keyword>
<dbReference type="EMBL" id="EU422980">
    <property type="protein sequence ID" value="ACC76749.1"/>
    <property type="molecule type" value="mRNA"/>
</dbReference>
<dbReference type="EMBL" id="BC121572">
    <property type="protein sequence ID" value="AAI21573.1"/>
    <property type="molecule type" value="mRNA"/>
</dbReference>
<dbReference type="RefSeq" id="NP_001137395.1">
    <property type="nucleotide sequence ID" value="NM_001143923.1"/>
</dbReference>
<dbReference type="SMR" id="B8QB46"/>
<dbReference type="FunCoup" id="B8QB46">
    <property type="interactions" value="2629"/>
</dbReference>
<dbReference type="STRING" id="8364.ENSXETP00000016318"/>
<dbReference type="PaxDb" id="8364-ENSXETP00000027303"/>
<dbReference type="GeneID" id="779476"/>
<dbReference type="KEGG" id="xtr:779476"/>
<dbReference type="CTD" id="54386"/>
<dbReference type="eggNOG" id="ENOG502RPXS">
    <property type="taxonomic scope" value="Eukaryota"/>
</dbReference>
<dbReference type="InParanoid" id="B8QB46"/>
<dbReference type="OrthoDB" id="435460at2759"/>
<dbReference type="Reactome" id="R-XTR-110330">
    <property type="pathway name" value="Recognition and association of DNA glycosylase with site containing an affected purine"/>
</dbReference>
<dbReference type="Reactome" id="R-XTR-110331">
    <property type="pathway name" value="Cleavage of the damaged purine"/>
</dbReference>
<dbReference type="Reactome" id="R-XTR-171306">
    <property type="pathway name" value="Packaging Of Telomere Ends"/>
</dbReference>
<dbReference type="Reactome" id="R-XTR-171319">
    <property type="pathway name" value="Telomere Extension By Telomerase"/>
</dbReference>
<dbReference type="Reactome" id="R-XTR-174411">
    <property type="pathway name" value="Polymerase switching on the C-strand of the telomere"/>
</dbReference>
<dbReference type="Reactome" id="R-XTR-2559586">
    <property type="pathway name" value="DNA Damage/Telomere Stress Induced Senescence"/>
</dbReference>
<dbReference type="Proteomes" id="UP000008143">
    <property type="component" value="Chromosome 10"/>
</dbReference>
<dbReference type="GO" id="GO:0000781">
    <property type="term" value="C:chromosome, telomeric region"/>
    <property type="evidence" value="ECO:0000250"/>
    <property type="project" value="UniProtKB"/>
</dbReference>
<dbReference type="GO" id="GO:0005737">
    <property type="term" value="C:cytoplasm"/>
    <property type="evidence" value="ECO:0000250"/>
    <property type="project" value="UniProtKB"/>
</dbReference>
<dbReference type="GO" id="GO:0005634">
    <property type="term" value="C:nucleus"/>
    <property type="evidence" value="ECO:0000250"/>
    <property type="project" value="UniProtKB"/>
</dbReference>
<dbReference type="GO" id="GO:0048239">
    <property type="term" value="P:negative regulation of DNA recombination at telomere"/>
    <property type="evidence" value="ECO:0000250"/>
    <property type="project" value="UniProtKB"/>
</dbReference>
<dbReference type="GO" id="GO:0043123">
    <property type="term" value="P:positive regulation of canonical NF-kappaB signal transduction"/>
    <property type="evidence" value="ECO:0000250"/>
    <property type="project" value="UniProtKB"/>
</dbReference>
<dbReference type="GO" id="GO:0051092">
    <property type="term" value="P:positive regulation of NF-kappaB transcription factor activity"/>
    <property type="evidence" value="ECO:0000250"/>
    <property type="project" value="UniProtKB"/>
</dbReference>
<dbReference type="GO" id="GO:0006355">
    <property type="term" value="P:regulation of DNA-templated transcription"/>
    <property type="evidence" value="ECO:0000250"/>
    <property type="project" value="UniProtKB"/>
</dbReference>
<dbReference type="GO" id="GO:0010569">
    <property type="term" value="P:regulation of double-strand break repair via homologous recombination"/>
    <property type="evidence" value="ECO:0000250"/>
    <property type="project" value="UniProtKB"/>
</dbReference>
<dbReference type="GO" id="GO:0010833">
    <property type="term" value="P:telomere maintenance via telomere lengthening"/>
    <property type="evidence" value="ECO:0000250"/>
    <property type="project" value="UniProtKB"/>
</dbReference>
<dbReference type="CDD" id="cd11653">
    <property type="entry name" value="rap1_RCT"/>
    <property type="match status" value="1"/>
</dbReference>
<dbReference type="FunFam" id="1.10.10.2170:FF:000001">
    <property type="entry name" value="Telomeric repeat-binding factor 2-interacting protein 1"/>
    <property type="match status" value="1"/>
</dbReference>
<dbReference type="FunFam" id="1.10.10.60:FF:000246">
    <property type="entry name" value="Telomeric repeat-binding factor 2-interacting protein 1"/>
    <property type="match status" value="1"/>
</dbReference>
<dbReference type="Gene3D" id="1.10.10.2170">
    <property type="match status" value="1"/>
</dbReference>
<dbReference type="Gene3D" id="1.10.10.60">
    <property type="entry name" value="Homeodomain-like"/>
    <property type="match status" value="1"/>
</dbReference>
<dbReference type="InterPro" id="IPR001357">
    <property type="entry name" value="BRCT_dom"/>
</dbReference>
<dbReference type="InterPro" id="IPR009057">
    <property type="entry name" value="Homeodomain-like_sf"/>
</dbReference>
<dbReference type="InterPro" id="IPR021661">
    <property type="entry name" value="Rap1_C"/>
</dbReference>
<dbReference type="InterPro" id="IPR038104">
    <property type="entry name" value="Rap1_C_sf"/>
</dbReference>
<dbReference type="InterPro" id="IPR039595">
    <property type="entry name" value="TE2IP/Rap1"/>
</dbReference>
<dbReference type="InterPro" id="IPR015010">
    <property type="entry name" value="TERF2IP_Myb"/>
</dbReference>
<dbReference type="PANTHER" id="PTHR16466">
    <property type="entry name" value="TELOMERE REPEAT-BINDING FACTOR 2-INTERACTING PROTEIN 1"/>
    <property type="match status" value="1"/>
</dbReference>
<dbReference type="PANTHER" id="PTHR16466:SF6">
    <property type="entry name" value="TELOMERIC REPEAT-BINDING FACTOR 2-INTERACTING PROTEIN 1"/>
    <property type="match status" value="1"/>
</dbReference>
<dbReference type="Pfam" id="PF16589">
    <property type="entry name" value="BRCT_2"/>
    <property type="match status" value="1"/>
</dbReference>
<dbReference type="Pfam" id="PF08914">
    <property type="entry name" value="Myb_Rap1"/>
    <property type="match status" value="1"/>
</dbReference>
<dbReference type="Pfam" id="PF11626">
    <property type="entry name" value="Rap1_C"/>
    <property type="match status" value="1"/>
</dbReference>
<dbReference type="SUPFAM" id="SSF46689">
    <property type="entry name" value="Homeodomain-like"/>
    <property type="match status" value="1"/>
</dbReference>
<accession>B8QB46</accession>
<accession>Q0V9G9</accession>